<accession>Q86HD3</accession>
<accession>Q551M6</accession>
<dbReference type="EMBL" id="AAFI02000015">
    <property type="protein sequence ID" value="EAL69159.1"/>
    <property type="molecule type" value="Genomic_DNA"/>
</dbReference>
<dbReference type="RefSeq" id="XP_643104.1">
    <property type="nucleotide sequence ID" value="XM_638012.1"/>
</dbReference>
<dbReference type="SMR" id="Q86HD3"/>
<dbReference type="FunCoup" id="Q86HD3">
    <property type="interactions" value="858"/>
</dbReference>
<dbReference type="STRING" id="44689.Q86HD3"/>
<dbReference type="PaxDb" id="44689-DDB0252706"/>
<dbReference type="EnsemblProtists" id="EAL69159">
    <property type="protein sequence ID" value="EAL69159"/>
    <property type="gene ID" value="DDB_G0276411"/>
</dbReference>
<dbReference type="GeneID" id="8620508"/>
<dbReference type="KEGG" id="ddi:DDB_G0276411"/>
<dbReference type="dictyBase" id="DDB_G0276411">
    <property type="gene designation" value="mrt4"/>
</dbReference>
<dbReference type="VEuPathDB" id="AmoebaDB:DDB_G0276411"/>
<dbReference type="eggNOG" id="KOG0816">
    <property type="taxonomic scope" value="Eukaryota"/>
</dbReference>
<dbReference type="HOGENOM" id="CLU_071690_3_0_1"/>
<dbReference type="InParanoid" id="Q86HD3"/>
<dbReference type="OMA" id="LEWAENY"/>
<dbReference type="PhylomeDB" id="Q86HD3"/>
<dbReference type="PRO" id="PR:Q86HD3"/>
<dbReference type="Proteomes" id="UP000002195">
    <property type="component" value="Chromosome 2"/>
</dbReference>
<dbReference type="GO" id="GO:0005737">
    <property type="term" value="C:cytoplasm"/>
    <property type="evidence" value="ECO:0007669"/>
    <property type="project" value="UniProtKB-SubCell"/>
</dbReference>
<dbReference type="GO" id="GO:0005730">
    <property type="term" value="C:nucleolus"/>
    <property type="evidence" value="ECO:0000318"/>
    <property type="project" value="GO_Central"/>
</dbReference>
<dbReference type="GO" id="GO:0030687">
    <property type="term" value="C:preribosome, large subunit precursor"/>
    <property type="evidence" value="ECO:0000318"/>
    <property type="project" value="GO_Central"/>
</dbReference>
<dbReference type="GO" id="GO:0000956">
    <property type="term" value="P:nuclear-transcribed mRNA catabolic process"/>
    <property type="evidence" value="ECO:0000318"/>
    <property type="project" value="GO_Central"/>
</dbReference>
<dbReference type="GO" id="GO:0000027">
    <property type="term" value="P:ribosomal large subunit assembly"/>
    <property type="evidence" value="ECO:0007669"/>
    <property type="project" value="InterPro"/>
</dbReference>
<dbReference type="GO" id="GO:0042273">
    <property type="term" value="P:ribosomal large subunit biogenesis"/>
    <property type="evidence" value="ECO:0000318"/>
    <property type="project" value="GO_Central"/>
</dbReference>
<dbReference type="GO" id="GO:0006364">
    <property type="term" value="P:rRNA processing"/>
    <property type="evidence" value="ECO:0000318"/>
    <property type="project" value="GO_Central"/>
</dbReference>
<dbReference type="CDD" id="cd05796">
    <property type="entry name" value="Ribosomal_P0_like"/>
    <property type="match status" value="1"/>
</dbReference>
<dbReference type="FunFam" id="3.30.70.1730:FF:000005">
    <property type="entry name" value="Ribosome assembly factor mrt4"/>
    <property type="match status" value="1"/>
</dbReference>
<dbReference type="FunFam" id="3.90.105.20:FF:000003">
    <property type="entry name" value="Ribosome assembly factor mrt4"/>
    <property type="match status" value="1"/>
</dbReference>
<dbReference type="Gene3D" id="3.30.70.1730">
    <property type="match status" value="1"/>
</dbReference>
<dbReference type="Gene3D" id="3.90.105.20">
    <property type="match status" value="1"/>
</dbReference>
<dbReference type="InterPro" id="IPR033867">
    <property type="entry name" value="Mrt4"/>
</dbReference>
<dbReference type="InterPro" id="IPR001790">
    <property type="entry name" value="Ribosomal_uL10"/>
</dbReference>
<dbReference type="InterPro" id="IPR040637">
    <property type="entry name" value="Ribosomal_uL10-like_insert"/>
</dbReference>
<dbReference type="InterPro" id="IPR043164">
    <property type="entry name" value="Ribosomal_uL10-like_insert_sf"/>
</dbReference>
<dbReference type="InterPro" id="IPR043141">
    <property type="entry name" value="Ribosomal_uL10-like_sf"/>
</dbReference>
<dbReference type="InterPro" id="IPR051742">
    <property type="entry name" value="Ribosome_Assembly_uL10"/>
</dbReference>
<dbReference type="PANTHER" id="PTHR45841:SF1">
    <property type="entry name" value="MRNA TURNOVER PROTEIN 4 HOMOLOG"/>
    <property type="match status" value="1"/>
</dbReference>
<dbReference type="PANTHER" id="PTHR45841">
    <property type="entry name" value="MRNA TURNOVER PROTEIN 4 MRTO4"/>
    <property type="match status" value="1"/>
</dbReference>
<dbReference type="Pfam" id="PF00466">
    <property type="entry name" value="Ribosomal_L10"/>
    <property type="match status" value="1"/>
</dbReference>
<dbReference type="Pfam" id="PF17777">
    <property type="entry name" value="RL10P_insert"/>
    <property type="match status" value="1"/>
</dbReference>
<dbReference type="SUPFAM" id="SSF160369">
    <property type="entry name" value="Ribosomal protein L10-like"/>
    <property type="match status" value="1"/>
</dbReference>
<keyword id="KW-0963">Cytoplasm</keyword>
<keyword id="KW-0539">Nucleus</keyword>
<keyword id="KW-1185">Reference proteome</keyword>
<keyword id="KW-0690">Ribosome biogenesis</keyword>
<proteinExistence type="inferred from homology"/>
<evidence type="ECO:0000250" key="1">
    <source>
        <dbReference type="UniProtKB" id="P33201"/>
    </source>
</evidence>
<evidence type="ECO:0000305" key="2"/>
<evidence type="ECO:0000312" key="3">
    <source>
        <dbReference type="dictyBase" id="DDB_G0276411"/>
    </source>
</evidence>
<organism>
    <name type="scientific">Dictyostelium discoideum</name>
    <name type="common">Social amoeba</name>
    <dbReference type="NCBI Taxonomy" id="44689"/>
    <lineage>
        <taxon>Eukaryota</taxon>
        <taxon>Amoebozoa</taxon>
        <taxon>Evosea</taxon>
        <taxon>Eumycetozoa</taxon>
        <taxon>Dictyostelia</taxon>
        <taxon>Dictyosteliales</taxon>
        <taxon>Dictyosteliaceae</taxon>
        <taxon>Dictyostelium</taxon>
    </lineage>
</organism>
<reference key="1">
    <citation type="journal article" date="2002" name="Nature">
        <title>Sequence and analysis of chromosome 2 of Dictyostelium discoideum.</title>
        <authorList>
            <person name="Gloeckner G."/>
            <person name="Eichinger L."/>
            <person name="Szafranski K."/>
            <person name="Pachebat J.A."/>
            <person name="Bankier A.T."/>
            <person name="Dear P.H."/>
            <person name="Lehmann R."/>
            <person name="Baumgart C."/>
            <person name="Parra G."/>
            <person name="Abril J.F."/>
            <person name="Guigo R."/>
            <person name="Kumpf K."/>
            <person name="Tunggal B."/>
            <person name="Cox E.C."/>
            <person name="Quail M.A."/>
            <person name="Platzer M."/>
            <person name="Rosenthal A."/>
            <person name="Noegel A.A."/>
        </authorList>
    </citation>
    <scope>NUCLEOTIDE SEQUENCE [LARGE SCALE GENOMIC DNA]</scope>
    <source>
        <strain>AX4</strain>
    </source>
</reference>
<reference key="2">
    <citation type="journal article" date="2005" name="Nature">
        <title>The genome of the social amoeba Dictyostelium discoideum.</title>
        <authorList>
            <person name="Eichinger L."/>
            <person name="Pachebat J.A."/>
            <person name="Gloeckner G."/>
            <person name="Rajandream M.A."/>
            <person name="Sucgang R."/>
            <person name="Berriman M."/>
            <person name="Song J."/>
            <person name="Olsen R."/>
            <person name="Szafranski K."/>
            <person name="Xu Q."/>
            <person name="Tunggal B."/>
            <person name="Kummerfeld S."/>
            <person name="Madera M."/>
            <person name="Konfortov B.A."/>
            <person name="Rivero F."/>
            <person name="Bankier A.T."/>
            <person name="Lehmann R."/>
            <person name="Hamlin N."/>
            <person name="Davies R."/>
            <person name="Gaudet P."/>
            <person name="Fey P."/>
            <person name="Pilcher K."/>
            <person name="Chen G."/>
            <person name="Saunders D."/>
            <person name="Sodergren E.J."/>
            <person name="Davis P."/>
            <person name="Kerhornou A."/>
            <person name="Nie X."/>
            <person name="Hall N."/>
            <person name="Anjard C."/>
            <person name="Hemphill L."/>
            <person name="Bason N."/>
            <person name="Farbrother P."/>
            <person name="Desany B."/>
            <person name="Just E."/>
            <person name="Morio T."/>
            <person name="Rost R."/>
            <person name="Churcher C.M."/>
            <person name="Cooper J."/>
            <person name="Haydock S."/>
            <person name="van Driessche N."/>
            <person name="Cronin A."/>
            <person name="Goodhead I."/>
            <person name="Muzny D.M."/>
            <person name="Mourier T."/>
            <person name="Pain A."/>
            <person name="Lu M."/>
            <person name="Harper D."/>
            <person name="Lindsay R."/>
            <person name="Hauser H."/>
            <person name="James K.D."/>
            <person name="Quiles M."/>
            <person name="Madan Babu M."/>
            <person name="Saito T."/>
            <person name="Buchrieser C."/>
            <person name="Wardroper A."/>
            <person name="Felder M."/>
            <person name="Thangavelu M."/>
            <person name="Johnson D."/>
            <person name="Knights A."/>
            <person name="Loulseged H."/>
            <person name="Mungall K.L."/>
            <person name="Oliver K."/>
            <person name="Price C."/>
            <person name="Quail M.A."/>
            <person name="Urushihara H."/>
            <person name="Hernandez J."/>
            <person name="Rabbinowitsch E."/>
            <person name="Steffen D."/>
            <person name="Sanders M."/>
            <person name="Ma J."/>
            <person name="Kohara Y."/>
            <person name="Sharp S."/>
            <person name="Simmonds M.N."/>
            <person name="Spiegler S."/>
            <person name="Tivey A."/>
            <person name="Sugano S."/>
            <person name="White B."/>
            <person name="Walker D."/>
            <person name="Woodward J.R."/>
            <person name="Winckler T."/>
            <person name="Tanaka Y."/>
            <person name="Shaulsky G."/>
            <person name="Schleicher M."/>
            <person name="Weinstock G.M."/>
            <person name="Rosenthal A."/>
            <person name="Cox E.C."/>
            <person name="Chisholm R.L."/>
            <person name="Gibbs R.A."/>
            <person name="Loomis W.F."/>
            <person name="Platzer M."/>
            <person name="Kay R.R."/>
            <person name="Williams J.G."/>
            <person name="Dear P.H."/>
            <person name="Noegel A.A."/>
            <person name="Barrell B.G."/>
            <person name="Kuspa A."/>
        </authorList>
    </citation>
    <scope>NUCLEOTIDE SEQUENCE [LARGE SCALE GENOMIC DNA]</scope>
    <source>
        <strain>AX4</strain>
    </source>
</reference>
<comment type="function">
    <text evidence="1">Component of the ribosome assembly machinery. Nuclear paralog of the ribosomal protein P0, it binds pre-60S subunits at an early stage of assembly in the nucleolus, and is replaced by P0 in cytoplasmic pre-60S subunits and mature 80S ribosomes.</text>
</comment>
<comment type="subunit">
    <text evidence="1">Associates with the pre-60S ribosomal particle.</text>
</comment>
<comment type="subcellular location">
    <subcellularLocation>
        <location evidence="1">Nucleus</location>
        <location evidence="1">Nucleolus</location>
    </subcellularLocation>
    <subcellularLocation>
        <location evidence="1">Cytoplasm</location>
    </subcellularLocation>
    <text evidence="1">Shuttles between the nucleus and the cytoplasm.</text>
</comment>
<comment type="similarity">
    <text evidence="2">Belongs to the universal ribosomal protein uL10 family.</text>
</comment>
<name>MRT4_DICDI</name>
<sequence length="223" mass="25836">MVKSKRNVVVNMTKVTKNPGEKKKKLVSTIKDIVDQYKFIYLFTFENMRNNKLKSVRTEWSTSKFLFGKNKVLSVGLGKSEEDELKPNLHKLTEHLEGECGLFFTNEPKDKVFEYFTNYSEKDFPRSGFVSEETITIKEGPIVGMTHSMETYLRGLGLPTTLKNGVIFVDREYTLCEAGVAVTPEQSQLLKLFNHEISEFKFHIKGFWNEDEFTLCEEESQEE</sequence>
<feature type="chain" id="PRO_0000327750" description="Ribosome assembly factor mrt4">
    <location>
        <begin position="1"/>
        <end position="223"/>
    </location>
</feature>
<protein>
    <recommendedName>
        <fullName evidence="1">Ribosome assembly factor mrt4</fullName>
    </recommendedName>
    <alternativeName>
        <fullName evidence="1">mRNA turnover protein 4</fullName>
    </alternativeName>
</protein>
<gene>
    <name evidence="1" type="primary">mrt4</name>
    <name evidence="3" type="ORF">DDB_G0276411</name>
</gene>